<feature type="chain" id="PRO_0000089004" description="Actin">
    <location>
        <begin position="1"/>
        <end position="378"/>
    </location>
</feature>
<dbReference type="EC" id="3.6.4.-" evidence="1"/>
<dbReference type="EMBL" id="AF061018">
    <property type="protein sequence ID" value="AAC16053.1"/>
    <property type="molecule type" value="mRNA"/>
</dbReference>
<dbReference type="SMR" id="O65314"/>
<dbReference type="GO" id="GO:0005737">
    <property type="term" value="C:cytoplasm"/>
    <property type="evidence" value="ECO:0007669"/>
    <property type="project" value="UniProtKB-KW"/>
</dbReference>
<dbReference type="GO" id="GO:0005856">
    <property type="term" value="C:cytoskeleton"/>
    <property type="evidence" value="ECO:0007669"/>
    <property type="project" value="UniProtKB-SubCell"/>
</dbReference>
<dbReference type="GO" id="GO:0005524">
    <property type="term" value="F:ATP binding"/>
    <property type="evidence" value="ECO:0007669"/>
    <property type="project" value="UniProtKB-KW"/>
</dbReference>
<dbReference type="GO" id="GO:0016787">
    <property type="term" value="F:hydrolase activity"/>
    <property type="evidence" value="ECO:0007669"/>
    <property type="project" value="UniProtKB-KW"/>
</dbReference>
<dbReference type="CDD" id="cd10224">
    <property type="entry name" value="ASKHA_NBD_actin"/>
    <property type="match status" value="1"/>
</dbReference>
<dbReference type="FunFam" id="3.30.420.40:FF:000291">
    <property type="entry name" value="Actin, alpha skeletal muscle"/>
    <property type="match status" value="1"/>
</dbReference>
<dbReference type="FunFam" id="3.90.640.10:FF:000001">
    <property type="entry name" value="Actin, muscle"/>
    <property type="match status" value="1"/>
</dbReference>
<dbReference type="FunFam" id="3.30.420.40:FF:000404">
    <property type="entry name" value="Major actin"/>
    <property type="match status" value="1"/>
</dbReference>
<dbReference type="FunFam" id="3.30.420.40:FF:000058">
    <property type="entry name" value="Putative actin-related protein 5"/>
    <property type="match status" value="1"/>
</dbReference>
<dbReference type="Gene3D" id="3.30.420.40">
    <property type="match status" value="2"/>
</dbReference>
<dbReference type="Gene3D" id="3.90.640.10">
    <property type="entry name" value="Actin, Chain A, domain 4"/>
    <property type="match status" value="1"/>
</dbReference>
<dbReference type="InterPro" id="IPR004000">
    <property type="entry name" value="Actin"/>
</dbReference>
<dbReference type="InterPro" id="IPR020902">
    <property type="entry name" value="Actin/actin-like_CS"/>
</dbReference>
<dbReference type="InterPro" id="IPR004001">
    <property type="entry name" value="Actin_CS"/>
</dbReference>
<dbReference type="InterPro" id="IPR043129">
    <property type="entry name" value="ATPase_NBD"/>
</dbReference>
<dbReference type="PANTHER" id="PTHR11937">
    <property type="entry name" value="ACTIN"/>
    <property type="match status" value="1"/>
</dbReference>
<dbReference type="Pfam" id="PF00022">
    <property type="entry name" value="Actin"/>
    <property type="match status" value="1"/>
</dbReference>
<dbReference type="PRINTS" id="PR00190">
    <property type="entry name" value="ACTIN"/>
</dbReference>
<dbReference type="SMART" id="SM00268">
    <property type="entry name" value="ACTIN"/>
    <property type="match status" value="1"/>
</dbReference>
<dbReference type="SUPFAM" id="SSF53067">
    <property type="entry name" value="Actin-like ATPase domain"/>
    <property type="match status" value="2"/>
</dbReference>
<dbReference type="PROSITE" id="PS00406">
    <property type="entry name" value="ACTINS_1"/>
    <property type="match status" value="1"/>
</dbReference>
<dbReference type="PROSITE" id="PS00432">
    <property type="entry name" value="ACTINS_2"/>
    <property type="match status" value="1"/>
</dbReference>
<dbReference type="PROSITE" id="PS01132">
    <property type="entry name" value="ACTINS_ACT_LIKE"/>
    <property type="match status" value="1"/>
</dbReference>
<protein>
    <recommendedName>
        <fullName>Actin</fullName>
        <ecNumber evidence="1">3.6.4.-</ecNumber>
    </recommendedName>
</protein>
<keyword id="KW-0067">ATP-binding</keyword>
<keyword id="KW-0963">Cytoplasm</keyword>
<keyword id="KW-0206">Cytoskeleton</keyword>
<keyword id="KW-0378">Hydrolase</keyword>
<keyword id="KW-0547">Nucleotide-binding</keyword>
<sequence length="378" mass="41856">MADGDGEVSALVCDNGSGMVKAGFAGDDAPRAVFPSIVGRPRHQGVMVGMGQKDAYVGDEAQSKRGILTLKYPIEHGVVSNWDDMEKIWHHTFYNELRVAPEEHPVLLTEAPLNPKANREKMTQIMFETFNVPAMYVAIQAVLSLYASGRTTGIVLDSGDGVSHTVPIYEGYALPHAIMRLDLAGRDLTDNLMTILMERGYNFTTTAEREIVRDIKEKLCYVALDYEQEMANSLTSSQNEKNYELPDGQQITVGNERFRCPEVLFQPGLLGQESVGVHETTFNSIMKCDVDIRKDLYNNIVLSGGTTMFPGIADRMSKEITAVAPSSMKIKVVAPPERKYSVWIGGSILASLSTFQQMWIAKAEYDESGPSIVHRKCF</sequence>
<comment type="function">
    <text>Actins are highly conserved proteins that are involved in various types of cell motility and are ubiquitously expressed in all eukaryotic cells.</text>
</comment>
<comment type="catalytic activity">
    <reaction evidence="1">
        <text>ATP + H2O = ADP + phosphate + H(+)</text>
        <dbReference type="Rhea" id="RHEA:13065"/>
        <dbReference type="ChEBI" id="CHEBI:15377"/>
        <dbReference type="ChEBI" id="CHEBI:15378"/>
        <dbReference type="ChEBI" id="CHEBI:30616"/>
        <dbReference type="ChEBI" id="CHEBI:43474"/>
        <dbReference type="ChEBI" id="CHEBI:456216"/>
    </reaction>
</comment>
<comment type="subcellular location">
    <subcellularLocation>
        <location>Cytoplasm</location>
        <location>Cytoskeleton</location>
    </subcellularLocation>
</comment>
<comment type="similarity">
    <text evidence="2">Belongs to the actin family.</text>
</comment>
<proteinExistence type="evidence at transcript level"/>
<name>ACT_SCHDU</name>
<accession>O65314</accession>
<evidence type="ECO:0000250" key="1">
    <source>
        <dbReference type="UniProtKB" id="P68137"/>
    </source>
</evidence>
<evidence type="ECO:0000305" key="2"/>
<reference key="1">
    <citation type="journal article" date="1998" name="J. Mol. Evol.">
        <title>Actin phylogeny identifies Mesostigma viride as a flagellate ancestor of the land plants.</title>
        <authorList>
            <person name="Bhattacharya D."/>
            <person name="Weber K."/>
            <person name="An S.S."/>
            <person name="Berning-Koch W."/>
        </authorList>
    </citation>
    <scope>NUCLEOTIDE SEQUENCE [MRNA]</scope>
</reference>
<organism>
    <name type="scientific">Scherffelia dubia</name>
    <name type="common">Green alga</name>
    <name type="synonym">Chlamydomonas dubia</name>
    <dbReference type="NCBI Taxonomy" id="3190"/>
    <lineage>
        <taxon>Eukaryota</taxon>
        <taxon>Viridiplantae</taxon>
        <taxon>Chlorophyta</taxon>
        <taxon>core chlorophytes</taxon>
        <taxon>Chlorodendrophyceae</taxon>
        <taxon>Chlorodendrales</taxon>
        <taxon>Chlorodendraceae</taxon>
        <taxon>Scherffelia</taxon>
    </lineage>
</organism>